<reference key="1">
    <citation type="journal article" date="2000" name="Science">
        <title>The genome sequence of Drosophila melanogaster.</title>
        <authorList>
            <person name="Adams M.D."/>
            <person name="Celniker S.E."/>
            <person name="Holt R.A."/>
            <person name="Evans C.A."/>
            <person name="Gocayne J.D."/>
            <person name="Amanatides P.G."/>
            <person name="Scherer S.E."/>
            <person name="Li P.W."/>
            <person name="Hoskins R.A."/>
            <person name="Galle R.F."/>
            <person name="George R.A."/>
            <person name="Lewis S.E."/>
            <person name="Richards S."/>
            <person name="Ashburner M."/>
            <person name="Henderson S.N."/>
            <person name="Sutton G.G."/>
            <person name="Wortman J.R."/>
            <person name="Yandell M.D."/>
            <person name="Zhang Q."/>
            <person name="Chen L.X."/>
            <person name="Brandon R.C."/>
            <person name="Rogers Y.-H.C."/>
            <person name="Blazej R.G."/>
            <person name="Champe M."/>
            <person name="Pfeiffer B.D."/>
            <person name="Wan K.H."/>
            <person name="Doyle C."/>
            <person name="Baxter E.G."/>
            <person name="Helt G."/>
            <person name="Nelson C.R."/>
            <person name="Miklos G.L.G."/>
            <person name="Abril J.F."/>
            <person name="Agbayani A."/>
            <person name="An H.-J."/>
            <person name="Andrews-Pfannkoch C."/>
            <person name="Baldwin D."/>
            <person name="Ballew R.M."/>
            <person name="Basu A."/>
            <person name="Baxendale J."/>
            <person name="Bayraktaroglu L."/>
            <person name="Beasley E.M."/>
            <person name="Beeson K.Y."/>
            <person name="Benos P.V."/>
            <person name="Berman B.P."/>
            <person name="Bhandari D."/>
            <person name="Bolshakov S."/>
            <person name="Borkova D."/>
            <person name="Botchan M.R."/>
            <person name="Bouck J."/>
            <person name="Brokstein P."/>
            <person name="Brottier P."/>
            <person name="Burtis K.C."/>
            <person name="Busam D.A."/>
            <person name="Butler H."/>
            <person name="Cadieu E."/>
            <person name="Center A."/>
            <person name="Chandra I."/>
            <person name="Cherry J.M."/>
            <person name="Cawley S."/>
            <person name="Dahlke C."/>
            <person name="Davenport L.B."/>
            <person name="Davies P."/>
            <person name="de Pablos B."/>
            <person name="Delcher A."/>
            <person name="Deng Z."/>
            <person name="Mays A.D."/>
            <person name="Dew I."/>
            <person name="Dietz S.M."/>
            <person name="Dodson K."/>
            <person name="Doup L.E."/>
            <person name="Downes M."/>
            <person name="Dugan-Rocha S."/>
            <person name="Dunkov B.C."/>
            <person name="Dunn P."/>
            <person name="Durbin K.J."/>
            <person name="Evangelista C.C."/>
            <person name="Ferraz C."/>
            <person name="Ferriera S."/>
            <person name="Fleischmann W."/>
            <person name="Fosler C."/>
            <person name="Gabrielian A.E."/>
            <person name="Garg N.S."/>
            <person name="Gelbart W.M."/>
            <person name="Glasser K."/>
            <person name="Glodek A."/>
            <person name="Gong F."/>
            <person name="Gorrell J.H."/>
            <person name="Gu Z."/>
            <person name="Guan P."/>
            <person name="Harris M."/>
            <person name="Harris N.L."/>
            <person name="Harvey D.A."/>
            <person name="Heiman T.J."/>
            <person name="Hernandez J.R."/>
            <person name="Houck J."/>
            <person name="Hostin D."/>
            <person name="Houston K.A."/>
            <person name="Howland T.J."/>
            <person name="Wei M.-H."/>
            <person name="Ibegwam C."/>
            <person name="Jalali M."/>
            <person name="Kalush F."/>
            <person name="Karpen G.H."/>
            <person name="Ke Z."/>
            <person name="Kennison J.A."/>
            <person name="Ketchum K.A."/>
            <person name="Kimmel B.E."/>
            <person name="Kodira C.D."/>
            <person name="Kraft C.L."/>
            <person name="Kravitz S."/>
            <person name="Kulp D."/>
            <person name="Lai Z."/>
            <person name="Lasko P."/>
            <person name="Lei Y."/>
            <person name="Levitsky A.A."/>
            <person name="Li J.H."/>
            <person name="Li Z."/>
            <person name="Liang Y."/>
            <person name="Lin X."/>
            <person name="Liu X."/>
            <person name="Mattei B."/>
            <person name="McIntosh T.C."/>
            <person name="McLeod M.P."/>
            <person name="McPherson D."/>
            <person name="Merkulov G."/>
            <person name="Milshina N.V."/>
            <person name="Mobarry C."/>
            <person name="Morris J."/>
            <person name="Moshrefi A."/>
            <person name="Mount S.M."/>
            <person name="Moy M."/>
            <person name="Murphy B."/>
            <person name="Murphy L."/>
            <person name="Muzny D.M."/>
            <person name="Nelson D.L."/>
            <person name="Nelson D.R."/>
            <person name="Nelson K.A."/>
            <person name="Nixon K."/>
            <person name="Nusskern D.R."/>
            <person name="Pacleb J.M."/>
            <person name="Palazzolo M."/>
            <person name="Pittman G.S."/>
            <person name="Pan S."/>
            <person name="Pollard J."/>
            <person name="Puri V."/>
            <person name="Reese M.G."/>
            <person name="Reinert K."/>
            <person name="Remington K."/>
            <person name="Saunders R.D.C."/>
            <person name="Scheeler F."/>
            <person name="Shen H."/>
            <person name="Shue B.C."/>
            <person name="Siden-Kiamos I."/>
            <person name="Simpson M."/>
            <person name="Skupski M.P."/>
            <person name="Smith T.J."/>
            <person name="Spier E."/>
            <person name="Spradling A.C."/>
            <person name="Stapleton M."/>
            <person name="Strong R."/>
            <person name="Sun E."/>
            <person name="Svirskas R."/>
            <person name="Tector C."/>
            <person name="Turner R."/>
            <person name="Venter E."/>
            <person name="Wang A.H."/>
            <person name="Wang X."/>
            <person name="Wang Z.-Y."/>
            <person name="Wassarman D.A."/>
            <person name="Weinstock G.M."/>
            <person name="Weissenbach J."/>
            <person name="Williams S.M."/>
            <person name="Woodage T."/>
            <person name="Worley K.C."/>
            <person name="Wu D."/>
            <person name="Yang S."/>
            <person name="Yao Q.A."/>
            <person name="Ye J."/>
            <person name="Yeh R.-F."/>
            <person name="Zaveri J.S."/>
            <person name="Zhan M."/>
            <person name="Zhang G."/>
            <person name="Zhao Q."/>
            <person name="Zheng L."/>
            <person name="Zheng X.H."/>
            <person name="Zhong F.N."/>
            <person name="Zhong W."/>
            <person name="Zhou X."/>
            <person name="Zhu S.C."/>
            <person name="Zhu X."/>
            <person name="Smith H.O."/>
            <person name="Gibbs R.A."/>
            <person name="Myers E.W."/>
            <person name="Rubin G.M."/>
            <person name="Venter J.C."/>
        </authorList>
    </citation>
    <scope>NUCLEOTIDE SEQUENCE [LARGE SCALE GENOMIC DNA]</scope>
    <source>
        <strain>Berkeley</strain>
    </source>
</reference>
<reference key="2">
    <citation type="journal article" date="2002" name="Genome Biol.">
        <title>Annotation of the Drosophila melanogaster euchromatic genome: a systematic review.</title>
        <authorList>
            <person name="Misra S."/>
            <person name="Crosby M.A."/>
            <person name="Mungall C.J."/>
            <person name="Matthews B.B."/>
            <person name="Campbell K.S."/>
            <person name="Hradecky P."/>
            <person name="Huang Y."/>
            <person name="Kaminker J.S."/>
            <person name="Millburn G.H."/>
            <person name="Prochnik S.E."/>
            <person name="Smith C.D."/>
            <person name="Tupy J.L."/>
            <person name="Whitfield E.J."/>
            <person name="Bayraktaroglu L."/>
            <person name="Berman B.P."/>
            <person name="Bettencourt B.R."/>
            <person name="Celniker S.E."/>
            <person name="de Grey A.D.N.J."/>
            <person name="Drysdale R.A."/>
            <person name="Harris N.L."/>
            <person name="Richter J."/>
            <person name="Russo S."/>
            <person name="Schroeder A.J."/>
            <person name="Shu S.Q."/>
            <person name="Stapleton M."/>
            <person name="Yamada C."/>
            <person name="Ashburner M."/>
            <person name="Gelbart W.M."/>
            <person name="Rubin G.M."/>
            <person name="Lewis S.E."/>
        </authorList>
    </citation>
    <scope>GENOME REANNOTATION</scope>
    <source>
        <strain>Berkeley</strain>
    </source>
</reference>
<reference key="3">
    <citation type="submission" date="2004-05" db="EMBL/GenBank/DDBJ databases">
        <authorList>
            <person name="Stapleton M."/>
            <person name="Carlson J.W."/>
            <person name="Chavez C."/>
            <person name="Frise E."/>
            <person name="George R.A."/>
            <person name="Pacleb J.M."/>
            <person name="Park S."/>
            <person name="Wan K.H."/>
            <person name="Yu C."/>
            <person name="Rubin G.M."/>
            <person name="Celniker S.E."/>
        </authorList>
    </citation>
    <scope>NUCLEOTIDE SEQUENCE [LARGE SCALE MRNA]</scope>
    <source>
        <strain>Berkeley</strain>
        <tissue>Embryo</tissue>
    </source>
</reference>
<reference key="4">
    <citation type="journal article" date="2013" name="Nature">
        <title>Structures of the human and Drosophila 80S ribosome.</title>
        <authorList>
            <person name="Anger A.M."/>
            <person name="Armache J.P."/>
            <person name="Berninghausen O."/>
            <person name="Habeck M."/>
            <person name="Subklewe M."/>
            <person name="Wilson D.N."/>
            <person name="Beckmann R."/>
        </authorList>
    </citation>
    <scope>STRUCTURE BY ELECTRON MICROSCOPY (6.0 ANGSTROMS) OF THE 80S RIBOSOME</scope>
</reference>
<gene>
    <name type="primary">RpL10Ab</name>
    <name type="ORF">CG7283</name>
</gene>
<name>R10AB_DROME</name>
<protein>
    <recommendedName>
        <fullName evidence="1">Large ribosomal subunit protein uL1</fullName>
    </recommendedName>
    <alternativeName>
        <fullName>60S ribosomal protein L10a-2</fullName>
    </alternativeName>
</protein>
<organism>
    <name type="scientific">Drosophila melanogaster</name>
    <name type="common">Fruit fly</name>
    <dbReference type="NCBI Taxonomy" id="7227"/>
    <lineage>
        <taxon>Eukaryota</taxon>
        <taxon>Metazoa</taxon>
        <taxon>Ecdysozoa</taxon>
        <taxon>Arthropoda</taxon>
        <taxon>Hexapoda</taxon>
        <taxon>Insecta</taxon>
        <taxon>Pterygota</taxon>
        <taxon>Neoptera</taxon>
        <taxon>Endopterygota</taxon>
        <taxon>Diptera</taxon>
        <taxon>Brachycera</taxon>
        <taxon>Muscomorpha</taxon>
        <taxon>Ephydroidea</taxon>
        <taxon>Drosophilidae</taxon>
        <taxon>Drosophila</taxon>
        <taxon>Sophophora</taxon>
    </lineage>
</organism>
<dbReference type="EMBL" id="AE014296">
    <property type="protein sequence ID" value="AAF50002.2"/>
    <property type="molecule type" value="Genomic_DNA"/>
</dbReference>
<dbReference type="EMBL" id="BT014654">
    <property type="protein sequence ID" value="AAT27278.1"/>
    <property type="molecule type" value="mRNA"/>
</dbReference>
<dbReference type="RefSeq" id="NP_648514.1">
    <property type="nucleotide sequence ID" value="NM_140257.2"/>
</dbReference>
<dbReference type="PDB" id="4V6W">
    <property type="method" value="EM"/>
    <property type="resolution" value="6.00 A"/>
    <property type="chains" value="Cz=1-217"/>
</dbReference>
<dbReference type="PDB" id="6XU6">
    <property type="method" value="EM"/>
    <property type="resolution" value="3.50 A"/>
    <property type="chains" value="Cz=1-217"/>
</dbReference>
<dbReference type="PDB" id="6XU7">
    <property type="method" value="EM"/>
    <property type="resolution" value="4.90 A"/>
    <property type="chains" value="Cz=1-217"/>
</dbReference>
<dbReference type="PDB" id="6XU8">
    <property type="method" value="EM"/>
    <property type="resolution" value="3.00 A"/>
    <property type="chains" value="Cz=1-217"/>
</dbReference>
<dbReference type="PDBsum" id="4V6W"/>
<dbReference type="PDBsum" id="6XU6"/>
<dbReference type="PDBsum" id="6XU7"/>
<dbReference type="PDBsum" id="6XU8"/>
<dbReference type="EMDB" id="EMD-10622"/>
<dbReference type="EMDB" id="EMD-10623"/>
<dbReference type="EMDB" id="EMD-10624"/>
<dbReference type="SMR" id="Q9VTP4"/>
<dbReference type="BioGRID" id="64699">
    <property type="interactions" value="112"/>
</dbReference>
<dbReference type="FunCoup" id="Q9VTP4">
    <property type="interactions" value="1025"/>
</dbReference>
<dbReference type="IntAct" id="Q9VTP4">
    <property type="interactions" value="3"/>
</dbReference>
<dbReference type="MINT" id="Q9VTP4"/>
<dbReference type="STRING" id="7227.FBpp0075764"/>
<dbReference type="PaxDb" id="7227-FBpp0075764"/>
<dbReference type="DNASU" id="39338"/>
<dbReference type="EnsemblMetazoa" id="FBtr0076032">
    <property type="protein sequence ID" value="FBpp0075764"/>
    <property type="gene ID" value="FBgn0036213"/>
</dbReference>
<dbReference type="GeneID" id="39338"/>
<dbReference type="KEGG" id="dme:Dmel_CG7283"/>
<dbReference type="AGR" id="FB:FBgn0036213"/>
<dbReference type="CTD" id="39338"/>
<dbReference type="FlyBase" id="FBgn0036213">
    <property type="gene designation" value="RpL10Ab"/>
</dbReference>
<dbReference type="VEuPathDB" id="VectorBase:FBgn0036213"/>
<dbReference type="eggNOG" id="KOG1570">
    <property type="taxonomic scope" value="Eukaryota"/>
</dbReference>
<dbReference type="GeneTree" id="ENSGT00390000008767"/>
<dbReference type="HOGENOM" id="CLU_062853_3_0_1"/>
<dbReference type="InParanoid" id="Q9VTP4"/>
<dbReference type="OMA" id="GPRNKMP"/>
<dbReference type="OrthoDB" id="2449818at2759"/>
<dbReference type="PhylomeDB" id="Q9VTP4"/>
<dbReference type="Reactome" id="R-DME-156827">
    <property type="pathway name" value="L13a-mediated translational silencing of Ceruloplasmin expression"/>
</dbReference>
<dbReference type="Reactome" id="R-DME-1799339">
    <property type="pathway name" value="SRP-dependent cotranslational protein targeting to membrane"/>
</dbReference>
<dbReference type="Reactome" id="R-DME-72689">
    <property type="pathway name" value="Formation of a pool of free 40S subunits"/>
</dbReference>
<dbReference type="Reactome" id="R-DME-72706">
    <property type="pathway name" value="GTP hydrolysis and joining of the 60S ribosomal subunit"/>
</dbReference>
<dbReference type="Reactome" id="R-DME-975956">
    <property type="pathway name" value="Nonsense Mediated Decay (NMD) independent of the Exon Junction Complex (EJC)"/>
</dbReference>
<dbReference type="Reactome" id="R-DME-975957">
    <property type="pathway name" value="Nonsense Mediated Decay (NMD) enhanced by the Exon Junction Complex (EJC)"/>
</dbReference>
<dbReference type="SignaLink" id="Q9VTP4"/>
<dbReference type="BioGRID-ORCS" id="39338">
    <property type="hits" value="1 hit in 1 CRISPR screen"/>
</dbReference>
<dbReference type="ChiTaRS" id="RpL10Ab">
    <property type="organism name" value="fly"/>
</dbReference>
<dbReference type="GenomeRNAi" id="39338"/>
<dbReference type="PRO" id="PR:Q9VTP4"/>
<dbReference type="Proteomes" id="UP000000803">
    <property type="component" value="Chromosome 3L"/>
</dbReference>
<dbReference type="Bgee" id="FBgn0036213">
    <property type="expression patterns" value="Expressed in adult enteroendocrine precursor cell in adult midgut (Drosophila) and 276 other cell types or tissues"/>
</dbReference>
<dbReference type="ExpressionAtlas" id="Q9VTP4">
    <property type="expression patterns" value="baseline and differential"/>
</dbReference>
<dbReference type="GO" id="GO:0022625">
    <property type="term" value="C:cytosolic large ribosomal subunit"/>
    <property type="evidence" value="ECO:0000318"/>
    <property type="project" value="GO_Central"/>
</dbReference>
<dbReference type="GO" id="GO:0022626">
    <property type="term" value="C:cytosolic ribosome"/>
    <property type="evidence" value="ECO:0000314"/>
    <property type="project" value="FlyBase"/>
</dbReference>
<dbReference type="GO" id="GO:0003723">
    <property type="term" value="F:RNA binding"/>
    <property type="evidence" value="ECO:0000318"/>
    <property type="project" value="GO_Central"/>
</dbReference>
<dbReference type="GO" id="GO:0003735">
    <property type="term" value="F:structural constituent of ribosome"/>
    <property type="evidence" value="ECO:0000314"/>
    <property type="project" value="FlyBase"/>
</dbReference>
<dbReference type="GO" id="GO:0002181">
    <property type="term" value="P:cytoplasmic translation"/>
    <property type="evidence" value="ECO:0000304"/>
    <property type="project" value="FlyBase"/>
</dbReference>
<dbReference type="GO" id="GO:1904262">
    <property type="term" value="P:negative regulation of TORC1 signaling"/>
    <property type="evidence" value="ECO:0000315"/>
    <property type="project" value="FlyBase"/>
</dbReference>
<dbReference type="CDD" id="cd00403">
    <property type="entry name" value="Ribosomal_L1"/>
    <property type="match status" value="1"/>
</dbReference>
<dbReference type="FunFam" id="3.30.190.20:FF:000006">
    <property type="entry name" value="Ribosomal protein"/>
    <property type="match status" value="1"/>
</dbReference>
<dbReference type="FunFam" id="3.40.50.790:FF:000002">
    <property type="entry name" value="Ribosomal protein"/>
    <property type="match status" value="1"/>
</dbReference>
<dbReference type="FunFam" id="3.30.190.20:FF:000009">
    <property type="entry name" value="Ribosomal protein L10a"/>
    <property type="match status" value="1"/>
</dbReference>
<dbReference type="Gene3D" id="3.30.190.20">
    <property type="match status" value="1"/>
</dbReference>
<dbReference type="Gene3D" id="3.40.50.790">
    <property type="match status" value="1"/>
</dbReference>
<dbReference type="InterPro" id="IPR050257">
    <property type="entry name" value="eL8/uL1-like"/>
</dbReference>
<dbReference type="InterPro" id="IPR002143">
    <property type="entry name" value="Ribosomal_uL1"/>
</dbReference>
<dbReference type="InterPro" id="IPR023674">
    <property type="entry name" value="Ribosomal_uL1-like"/>
</dbReference>
<dbReference type="InterPro" id="IPR028364">
    <property type="entry name" value="Ribosomal_uL1/biogenesis"/>
</dbReference>
<dbReference type="InterPro" id="IPR016095">
    <property type="entry name" value="Ribosomal_uL1_3-a/b-sand"/>
</dbReference>
<dbReference type="PANTHER" id="PTHR23105">
    <property type="entry name" value="RIBOSOMAL PROTEIN L7AE FAMILY MEMBER"/>
    <property type="match status" value="1"/>
</dbReference>
<dbReference type="Pfam" id="PF00687">
    <property type="entry name" value="Ribosomal_L1"/>
    <property type="match status" value="1"/>
</dbReference>
<dbReference type="PIRSF" id="PIRSF002155">
    <property type="entry name" value="Ribosomal_L1"/>
    <property type="match status" value="1"/>
</dbReference>
<dbReference type="SUPFAM" id="SSF56808">
    <property type="entry name" value="Ribosomal protein L1"/>
    <property type="match status" value="1"/>
</dbReference>
<dbReference type="PROSITE" id="PS01199">
    <property type="entry name" value="RIBOSOMAL_L1"/>
    <property type="match status" value="1"/>
</dbReference>
<accession>Q9VTP4</accession>
<sequence length="217" mass="24274">MASKVSRDTLYEGVNGLLEASAKKKRGFLETVELQIGLKNYDPQKDKRFSGTVKLKHIPRPKMKVCILGDQQHCDEAKANNVDFMDAEALKKLNKNKKLVKKLAKSYDAFLASESLIKQIPRLLGPGLNKAGKFPALLSHQESMIGKIEEVKSTIKFQMKKVLCLSVAVGHVGMKSDELAQNVNLSINFLVSLLKKNWQNVRSLHVKSSMGPPQRLY</sequence>
<proteinExistence type="evidence at protein level"/>
<feature type="chain" id="PRO_0000125829" description="Large ribosomal subunit protein uL1">
    <location>
        <begin position="1"/>
        <end position="217"/>
    </location>
</feature>
<comment type="similarity">
    <text evidence="1">Belongs to the universal ribosomal protein uL1 family.</text>
</comment>
<evidence type="ECO:0000305" key="1"/>
<keyword id="KW-0002">3D-structure</keyword>
<keyword id="KW-1185">Reference proteome</keyword>
<keyword id="KW-0687">Ribonucleoprotein</keyword>
<keyword id="KW-0689">Ribosomal protein</keyword>